<evidence type="ECO:0000250" key="1"/>
<evidence type="ECO:0000305" key="2"/>
<comment type="function">
    <text evidence="1">Factor of infectivity and pathogenicity, required for optimal virus replication. Alters numerous pathways of T-lymphocyte function and down-regulates immunity surface molecules in order to evade host defense and increase viral infectivity. Alters the functionality of other immunity cells, like dendritic cells, monocytes/macrophages and NK cells. One of the earliest and most abundantly expressed viral proteins (By similarity).</text>
</comment>
<comment type="function">
    <text evidence="1">In infected CD4(+) T-lymphocytes, down-regulates cell surface expression of CD4, CD28, CD3, and MHC-I or MHC-II molecules.</text>
</comment>
<comment type="function">
    <text evidence="1">Interferes with TCR signaling from the cell membrane. Interacts with CD247/TCRZ (TCR zeta chain) and exert potent down-regulation of cell surface TCR/CD3 complexes (By similarity).</text>
</comment>
<comment type="function">
    <text evidence="1">Plays a role in optimizing the host cell environment for viral replication without causing cell death by apoptosis. Protects the infected cells from apoptosis in order to keep them alive until the next virus generation is ready to strike (By similarity).</text>
</comment>
<comment type="function">
    <text evidence="1">Extracellular Nef protein targets CD4(+) T-lymphocytes for apoptosis by interacting with CXCR4 surface receptors.</text>
</comment>
<comment type="subunit">
    <text evidence="1">Homodimer. Interacts with host CD247/TCRZ; this interaction induces down-regulation of cell surface TCR/CD3 complexes.</text>
</comment>
<comment type="subcellular location">
    <subcellularLocation>
        <location evidence="1">Host cell membrane</location>
        <topology evidence="1">Lipid-anchor</topology>
        <orientation evidence="1">Cytoplasmic side</orientation>
    </subcellularLocation>
    <text evidence="1">Associates with the inner plasma membrane through its N-terminal domain.</text>
</comment>
<comment type="domain">
    <text evidence="1">The N-terminal domain is composed of the N-myristoyl glycine and of a cluster of positively charged amino acids. It is required for inner plasma membrane targeting of Nef and virion incorporation, and thereby for infectivity (By similarity).</text>
</comment>
<comment type="similarity">
    <text evidence="2">Belongs to the lentivirus primate group Nef protein family.</text>
</comment>
<organismHost>
    <name type="scientific">Homo sapiens</name>
    <name type="common">Human</name>
    <dbReference type="NCBI Taxonomy" id="9606"/>
</organismHost>
<proteinExistence type="inferred from homology"/>
<feature type="initiator methionine" description="Removed; by host" evidence="1">
    <location>
        <position position="1"/>
    </location>
</feature>
<feature type="chain" id="PRO_0000085234" description="Protein Nef">
    <location>
        <begin position="2"/>
        <end position="253"/>
    </location>
</feature>
<feature type="region of interest" description="Acidic">
    <location>
        <begin position="88"/>
        <end position="95"/>
    </location>
</feature>
<feature type="region of interest" description="Mediates dimerization" evidence="1">
    <location>
        <begin position="140"/>
        <end position="156"/>
    </location>
</feature>
<feature type="short sequence motif" description="PxxP">
    <location>
        <begin position="104"/>
        <end position="107"/>
    </location>
</feature>
<feature type="lipid moiety-binding region" description="N-myristoyl glycine; by host" evidence="1">
    <location>
        <position position="2"/>
    </location>
</feature>
<accession>Q74127</accession>
<keyword id="KW-0014">AIDS</keyword>
<keyword id="KW-1032">Host cell membrane</keyword>
<keyword id="KW-1043">Host membrane</keyword>
<keyword id="KW-0945">Host-virus interaction</keyword>
<keyword id="KW-0449">Lipoprotein</keyword>
<keyword id="KW-0472">Membrane</keyword>
<keyword id="KW-0519">Myristate</keyword>
<keyword id="KW-0899">Viral immunoevasion</keyword>
<keyword id="KW-0843">Virulence</keyword>
<sequence>MGASGSKKCSRSLQGLRERLLRARGETCGGQWDGSAGEYLQFQEGSGRGQNLPSCEGQRYQQGDFMNTPWRTPAAGREGTLYKQQNMDDVDADNDNLIGVPVTPRVPLRAMTYKLAVDISHFLNEKGGLDGMYYSERRHRILDIYMEKEEGIIPDWQNYTHGPGVRYPKFFGWLWKLVPVDVPQGEEDHCLLHPAQTSGSDDPHGETLMWRFDPRLAYEYTAFNRYPEEFGYKSGLPEEEWKAKLKARGIPFS</sequence>
<name>NEF_HV2KR</name>
<protein>
    <recommendedName>
        <fullName>Protein Nef</fullName>
    </recommendedName>
    <alternativeName>
        <fullName>3'ORF</fullName>
    </alternativeName>
    <alternativeName>
        <fullName>Negative factor</fullName>
        <shortName>F-protein</shortName>
    </alternativeName>
</protein>
<organism>
    <name type="scientific">Human immunodeficiency virus type 2 subtype A (isolate KR)</name>
    <name type="common">HIV-2</name>
    <dbReference type="NCBI Taxonomy" id="73484"/>
    <lineage>
        <taxon>Viruses</taxon>
        <taxon>Riboviria</taxon>
        <taxon>Pararnavirae</taxon>
        <taxon>Artverviricota</taxon>
        <taxon>Revtraviricetes</taxon>
        <taxon>Ortervirales</taxon>
        <taxon>Retroviridae</taxon>
        <taxon>Orthoretrovirinae</taxon>
        <taxon>Lentivirus</taxon>
        <taxon>Human immunodeficiency virus 2</taxon>
    </lineage>
</organism>
<reference key="1">
    <citation type="submission" date="1995-04" db="EMBL/GenBank/DDBJ databases">
        <authorList>
            <person name="Kraus G.K."/>
            <person name="Talbott R."/>
            <person name="Leavitt M."/>
            <person name="Luznick L."/>
            <person name="Schmidt A."/>
            <person name="Badel P."/>
            <person name="Bartz C."/>
            <person name="Morton W."/>
            <person name="Wong-Staal F."/>
            <person name="Looney D.J."/>
        </authorList>
    </citation>
    <scope>NUCLEOTIDE SEQUENCE [GENOMIC DNA]</scope>
</reference>
<gene>
    <name type="primary">nef</name>
</gene>
<dbReference type="EMBL" id="U22047">
    <property type="protein sequence ID" value="AAA64583.1"/>
    <property type="molecule type" value="Genomic_DNA"/>
</dbReference>
<dbReference type="SMR" id="Q74127"/>
<dbReference type="Proteomes" id="UP000007425">
    <property type="component" value="Segment"/>
</dbReference>
<dbReference type="GO" id="GO:0020002">
    <property type="term" value="C:host cell plasma membrane"/>
    <property type="evidence" value="ECO:0007669"/>
    <property type="project" value="UniProtKB-SubCell"/>
</dbReference>
<dbReference type="GO" id="GO:0016020">
    <property type="term" value="C:membrane"/>
    <property type="evidence" value="ECO:0007669"/>
    <property type="project" value="UniProtKB-KW"/>
</dbReference>
<dbReference type="GO" id="GO:0005525">
    <property type="term" value="F:GTP binding"/>
    <property type="evidence" value="ECO:0007669"/>
    <property type="project" value="InterPro"/>
</dbReference>
<dbReference type="Gene3D" id="3.30.62.10">
    <property type="entry name" value="Nef Regulatory Factor"/>
    <property type="match status" value="1"/>
</dbReference>
<dbReference type="InterPro" id="IPR027481">
    <property type="entry name" value="HIV-1_Nef_core_sf"/>
</dbReference>
<dbReference type="InterPro" id="IPR001558">
    <property type="entry name" value="HIV_Nef"/>
</dbReference>
<dbReference type="Pfam" id="PF00469">
    <property type="entry name" value="F-protein"/>
    <property type="match status" value="1"/>
</dbReference>
<dbReference type="SUPFAM" id="SSF55671">
    <property type="entry name" value="Regulatory factor Nef"/>
    <property type="match status" value="1"/>
</dbReference>